<gene>
    <name type="primary">DAD2</name>
    <name type="ordered locus">DEHA2C06138g</name>
</gene>
<sequence length="149" mass="17148">MDRRTVLKSTHIQQKIAEKKAELENLNEIKKFTSILTNQLDELENKLDYMAEGTESVALVLSNWQNVVKSVSLASLGLLKYSEKDYETGAPLPECLVRIKLDKDDNVGEEIQEKEEMETDDYISDQQAEESENINEEEDRQEVQTSYTD</sequence>
<evidence type="ECO:0000250" key="1">
    <source>
        <dbReference type="UniProtKB" id="P36162"/>
    </source>
</evidence>
<evidence type="ECO:0000250" key="2">
    <source>
        <dbReference type="UniProtKB" id="Q9UTG8"/>
    </source>
</evidence>
<evidence type="ECO:0000255" key="3"/>
<evidence type="ECO:0000256" key="4">
    <source>
        <dbReference type="SAM" id="MobiDB-lite"/>
    </source>
</evidence>
<evidence type="ECO:0000305" key="5"/>
<accession>Q6BV14</accession>
<dbReference type="EMBL" id="CR382135">
    <property type="protein sequence ID" value="CAG86011.2"/>
    <property type="molecule type" value="Genomic_DNA"/>
</dbReference>
<dbReference type="RefSeq" id="XP_457955.2">
    <property type="nucleotide sequence ID" value="XM_457955.1"/>
</dbReference>
<dbReference type="SMR" id="Q6BV14"/>
<dbReference type="FunCoup" id="Q6BV14">
    <property type="interactions" value="30"/>
</dbReference>
<dbReference type="STRING" id="284592.Q6BV14"/>
<dbReference type="GeneID" id="2900775"/>
<dbReference type="KEGG" id="dha:DEHA2C06138g"/>
<dbReference type="VEuPathDB" id="FungiDB:DEHA2C06138g"/>
<dbReference type="eggNOG" id="ENOG502SG7I">
    <property type="taxonomic scope" value="Eukaryota"/>
</dbReference>
<dbReference type="HOGENOM" id="CLU_138063_2_0_1"/>
<dbReference type="InParanoid" id="Q6BV14"/>
<dbReference type="OMA" id="QAINMAS"/>
<dbReference type="OrthoDB" id="3230169at2759"/>
<dbReference type="Proteomes" id="UP000000599">
    <property type="component" value="Chromosome C"/>
</dbReference>
<dbReference type="GO" id="GO:0005737">
    <property type="term" value="C:cytoplasm"/>
    <property type="evidence" value="ECO:0007669"/>
    <property type="project" value="UniProtKB-KW"/>
</dbReference>
<dbReference type="GO" id="GO:0042729">
    <property type="term" value="C:DASH complex"/>
    <property type="evidence" value="ECO:0000250"/>
    <property type="project" value="UniProtKB"/>
</dbReference>
<dbReference type="GO" id="GO:0005874">
    <property type="term" value="C:microtubule"/>
    <property type="evidence" value="ECO:0007669"/>
    <property type="project" value="UniProtKB-KW"/>
</dbReference>
<dbReference type="GO" id="GO:1990023">
    <property type="term" value="C:mitotic spindle midzone"/>
    <property type="evidence" value="ECO:0007669"/>
    <property type="project" value="TreeGrafter"/>
</dbReference>
<dbReference type="GO" id="GO:0044732">
    <property type="term" value="C:mitotic spindle pole body"/>
    <property type="evidence" value="ECO:0007669"/>
    <property type="project" value="TreeGrafter"/>
</dbReference>
<dbReference type="GO" id="GO:0008608">
    <property type="term" value="P:attachment of spindle microtubules to kinetochore"/>
    <property type="evidence" value="ECO:0000250"/>
    <property type="project" value="UniProtKB"/>
</dbReference>
<dbReference type="GO" id="GO:0051301">
    <property type="term" value="P:cell division"/>
    <property type="evidence" value="ECO:0007669"/>
    <property type="project" value="UniProtKB-KW"/>
</dbReference>
<dbReference type="GO" id="GO:1990758">
    <property type="term" value="P:mitotic sister chromatid biorientation"/>
    <property type="evidence" value="ECO:0000250"/>
    <property type="project" value="UniProtKB"/>
</dbReference>
<dbReference type="GO" id="GO:1990976">
    <property type="term" value="P:protein transport along microtubule to mitotic spindle pole body"/>
    <property type="evidence" value="ECO:0000250"/>
    <property type="project" value="UniProtKB"/>
</dbReference>
<dbReference type="InterPro" id="IPR013963">
    <property type="entry name" value="DASH_Dad2"/>
</dbReference>
<dbReference type="PANTHER" id="PTHR28036">
    <property type="entry name" value="DASH COMPLEX SUBUNIT DAD2"/>
    <property type="match status" value="1"/>
</dbReference>
<dbReference type="PANTHER" id="PTHR28036:SF1">
    <property type="entry name" value="DASH COMPLEX SUBUNIT DAD2"/>
    <property type="match status" value="1"/>
</dbReference>
<dbReference type="Pfam" id="PF08654">
    <property type="entry name" value="DASH_Dad2"/>
    <property type="match status" value="1"/>
</dbReference>
<proteinExistence type="inferred from homology"/>
<feature type="chain" id="PRO_0000211594" description="DASH complex subunit DAD2">
    <location>
        <begin position="1"/>
        <end position="149"/>
    </location>
</feature>
<feature type="region of interest" description="Disordered" evidence="4">
    <location>
        <begin position="107"/>
        <end position="149"/>
    </location>
</feature>
<feature type="coiled-coil region" evidence="3">
    <location>
        <begin position="7"/>
        <end position="56"/>
    </location>
</feature>
<feature type="compositionally biased region" description="Acidic residues" evidence="4">
    <location>
        <begin position="107"/>
        <end position="140"/>
    </location>
</feature>
<comment type="function">
    <text evidence="1">Component of the DASH complex that connects microtubules with kinetochores and couples microtubule depolymerisation to chromosome movement; it is involved in retrieving kinetochores to the spindle poles before their re-orientation on the spindle in early mitosis and allows microtubule depolymerization to pull chromosomes apart and resist detachment during anaphase. Kinetochores, consisting of a centromere-associated inner segment and a microtubule-contacting outer segment, play a crucial role in chromosome segregation by mediating the physical connection between centromeric DNA and microtubules. Kinetochores also serve as an input point for the spindle assembly checkpoint, which delays anaphase until all chromosomes have bioriented on the mitotic spindle.</text>
</comment>
<comment type="subunit">
    <text evidence="1 2">Component of the DASH complex consisting of ASK1, DAD1, DAD2, DAD3, DAD4, DAM1, DUO1, HSK3, SPC19 and SPC34, with a stoichiometry of one copy of each subunit per complex. Multiple DASH complexes oligomerize to form a ring that encircles spindle microtubules and organizes the rod-like NDC80 complexes of the outer kinetochore. DASH complex oligomerization strengthens microtubule attachments (By similarity). On cytoplasmic microtubules, DASH complexes appear to form patches instead of rings (By similarity).</text>
</comment>
<comment type="subcellular location">
    <subcellularLocation>
        <location evidence="1">Nucleus</location>
    </subcellularLocation>
    <subcellularLocation>
        <location evidence="1">Cytoplasm</location>
        <location evidence="1">Cytoskeleton</location>
        <location evidence="1">Spindle</location>
    </subcellularLocation>
    <subcellularLocation>
        <location evidence="1">Chromosome</location>
        <location evidence="1">Centromere</location>
        <location evidence="1">Kinetochore</location>
    </subcellularLocation>
</comment>
<comment type="similarity">
    <text evidence="5">Belongs to the DASH complex DAD2 family.</text>
</comment>
<keyword id="KW-0131">Cell cycle</keyword>
<keyword id="KW-0132">Cell division</keyword>
<keyword id="KW-0137">Centromere</keyword>
<keyword id="KW-0158">Chromosome</keyword>
<keyword id="KW-0159">Chromosome partition</keyword>
<keyword id="KW-0175">Coiled coil</keyword>
<keyword id="KW-0963">Cytoplasm</keyword>
<keyword id="KW-0206">Cytoskeleton</keyword>
<keyword id="KW-0995">Kinetochore</keyword>
<keyword id="KW-0493">Microtubule</keyword>
<keyword id="KW-0498">Mitosis</keyword>
<keyword id="KW-0539">Nucleus</keyword>
<keyword id="KW-1185">Reference proteome</keyword>
<name>DAD2_DEBHA</name>
<reference key="1">
    <citation type="journal article" date="2004" name="Nature">
        <title>Genome evolution in yeasts.</title>
        <authorList>
            <person name="Dujon B."/>
            <person name="Sherman D."/>
            <person name="Fischer G."/>
            <person name="Durrens P."/>
            <person name="Casaregola S."/>
            <person name="Lafontaine I."/>
            <person name="de Montigny J."/>
            <person name="Marck C."/>
            <person name="Neuveglise C."/>
            <person name="Talla E."/>
            <person name="Goffard N."/>
            <person name="Frangeul L."/>
            <person name="Aigle M."/>
            <person name="Anthouard V."/>
            <person name="Babour A."/>
            <person name="Barbe V."/>
            <person name="Barnay S."/>
            <person name="Blanchin S."/>
            <person name="Beckerich J.-M."/>
            <person name="Beyne E."/>
            <person name="Bleykasten C."/>
            <person name="Boisrame A."/>
            <person name="Boyer J."/>
            <person name="Cattolico L."/>
            <person name="Confanioleri F."/>
            <person name="de Daruvar A."/>
            <person name="Despons L."/>
            <person name="Fabre E."/>
            <person name="Fairhead C."/>
            <person name="Ferry-Dumazet H."/>
            <person name="Groppi A."/>
            <person name="Hantraye F."/>
            <person name="Hennequin C."/>
            <person name="Jauniaux N."/>
            <person name="Joyet P."/>
            <person name="Kachouri R."/>
            <person name="Kerrest A."/>
            <person name="Koszul R."/>
            <person name="Lemaire M."/>
            <person name="Lesur I."/>
            <person name="Ma L."/>
            <person name="Muller H."/>
            <person name="Nicaud J.-M."/>
            <person name="Nikolski M."/>
            <person name="Oztas S."/>
            <person name="Ozier-Kalogeropoulos O."/>
            <person name="Pellenz S."/>
            <person name="Potier S."/>
            <person name="Richard G.-F."/>
            <person name="Straub M.-L."/>
            <person name="Suleau A."/>
            <person name="Swennen D."/>
            <person name="Tekaia F."/>
            <person name="Wesolowski-Louvel M."/>
            <person name="Westhof E."/>
            <person name="Wirth B."/>
            <person name="Zeniou-Meyer M."/>
            <person name="Zivanovic Y."/>
            <person name="Bolotin-Fukuhara M."/>
            <person name="Thierry A."/>
            <person name="Bouchier C."/>
            <person name="Caudron B."/>
            <person name="Scarpelli C."/>
            <person name="Gaillardin C."/>
            <person name="Weissenbach J."/>
            <person name="Wincker P."/>
            <person name="Souciet J.-L."/>
        </authorList>
    </citation>
    <scope>NUCLEOTIDE SEQUENCE [LARGE SCALE GENOMIC DNA]</scope>
    <source>
        <strain>ATCC 36239 / CBS 767 / BCRC 21394 / JCM 1990 / NBRC 0083 / IGC 2968</strain>
    </source>
</reference>
<protein>
    <recommendedName>
        <fullName>DASH complex subunit DAD2</fullName>
    </recommendedName>
    <alternativeName>
        <fullName>Outer kinetochore protein DAD2</fullName>
    </alternativeName>
</protein>
<organism>
    <name type="scientific">Debaryomyces hansenii (strain ATCC 36239 / CBS 767 / BCRC 21394 / JCM 1990 / NBRC 0083 / IGC 2968)</name>
    <name type="common">Yeast</name>
    <name type="synonym">Torulaspora hansenii</name>
    <dbReference type="NCBI Taxonomy" id="284592"/>
    <lineage>
        <taxon>Eukaryota</taxon>
        <taxon>Fungi</taxon>
        <taxon>Dikarya</taxon>
        <taxon>Ascomycota</taxon>
        <taxon>Saccharomycotina</taxon>
        <taxon>Pichiomycetes</taxon>
        <taxon>Debaryomycetaceae</taxon>
        <taxon>Debaryomyces</taxon>
    </lineage>
</organism>